<feature type="chain" id="PRO_0000308440" description="Signal transduction histidine-protein kinase/phosphatase MprB">
    <location>
        <begin position="1"/>
        <end position="504"/>
    </location>
</feature>
<feature type="topological domain" description="Cytoplasmic" evidence="1">
    <location>
        <begin position="1"/>
        <end position="26"/>
    </location>
</feature>
<feature type="transmembrane region" description="Helical" evidence="1">
    <location>
        <begin position="27"/>
        <end position="47"/>
    </location>
</feature>
<feature type="topological domain" description="Extracellular" evidence="1">
    <location>
        <begin position="48"/>
        <end position="163"/>
    </location>
</feature>
<feature type="transmembrane region" description="Helical" evidence="1">
    <location>
        <begin position="164"/>
        <end position="184"/>
    </location>
</feature>
<feature type="topological domain" description="Cytoplasmic" evidence="1">
    <location>
        <begin position="185"/>
        <end position="504"/>
    </location>
</feature>
<feature type="domain" description="HAMP" evidence="2">
    <location>
        <begin position="186"/>
        <end position="238"/>
    </location>
</feature>
<feature type="domain" description="Histidine kinase" evidence="3">
    <location>
        <begin position="246"/>
        <end position="466"/>
    </location>
</feature>
<feature type="region of interest" description="Disordered" evidence="4">
    <location>
        <begin position="471"/>
        <end position="504"/>
    </location>
</feature>
<feature type="compositionally biased region" description="Polar residues" evidence="4">
    <location>
        <begin position="487"/>
        <end position="504"/>
    </location>
</feature>
<feature type="modified residue" description="Phosphohistidine; by autocatalysis" evidence="12">
    <location>
        <position position="249"/>
    </location>
</feature>
<feature type="mutagenesis site" description="Abolishes autophosphorylation as well as dephosphorylation of phospho-MprA." evidence="7">
    <original>H</original>
    <variation>Q</variation>
    <location>
        <position position="249"/>
    </location>
</feature>
<dbReference type="EC" id="2.7.13.3"/>
<dbReference type="EC" id="3.1.3.-"/>
<dbReference type="EMBL" id="AL123456">
    <property type="protein sequence ID" value="CCP43732.1"/>
    <property type="molecule type" value="Genomic_DNA"/>
</dbReference>
<dbReference type="PIR" id="B70821">
    <property type="entry name" value="B70821"/>
</dbReference>
<dbReference type="RefSeq" id="NP_215497.1">
    <property type="nucleotide sequence ID" value="NC_000962.3"/>
</dbReference>
<dbReference type="RefSeq" id="WP_003911317.1">
    <property type="nucleotide sequence ID" value="NZ_NVQJ01000018.1"/>
</dbReference>
<dbReference type="SMR" id="P9WGL1"/>
<dbReference type="FunCoup" id="P9WGL1">
    <property type="interactions" value="57"/>
</dbReference>
<dbReference type="STRING" id="83332.Rv0982"/>
<dbReference type="PaxDb" id="83332-Rv0982"/>
<dbReference type="DNASU" id="885062"/>
<dbReference type="GeneID" id="885062"/>
<dbReference type="KEGG" id="mtu:Rv0982"/>
<dbReference type="KEGG" id="mtv:RVBD_0982"/>
<dbReference type="TubercuList" id="Rv0982"/>
<dbReference type="eggNOG" id="COG2205">
    <property type="taxonomic scope" value="Bacteria"/>
</dbReference>
<dbReference type="eggNOG" id="COG2972">
    <property type="taxonomic scope" value="Bacteria"/>
</dbReference>
<dbReference type="InParanoid" id="P9WGL1"/>
<dbReference type="OrthoDB" id="9786919at2"/>
<dbReference type="PhylomeDB" id="P9WGL1"/>
<dbReference type="Proteomes" id="UP000001584">
    <property type="component" value="Chromosome"/>
</dbReference>
<dbReference type="GO" id="GO:0005576">
    <property type="term" value="C:extracellular region"/>
    <property type="evidence" value="ECO:0007005"/>
    <property type="project" value="MTBBASE"/>
</dbReference>
<dbReference type="GO" id="GO:0005886">
    <property type="term" value="C:plasma membrane"/>
    <property type="evidence" value="ECO:0007005"/>
    <property type="project" value="MTBBASE"/>
</dbReference>
<dbReference type="GO" id="GO:0005524">
    <property type="term" value="F:ATP binding"/>
    <property type="evidence" value="ECO:0007669"/>
    <property type="project" value="UniProtKB-KW"/>
</dbReference>
<dbReference type="GO" id="GO:0004721">
    <property type="term" value="F:phosphoprotein phosphatase activity"/>
    <property type="evidence" value="ECO:0007669"/>
    <property type="project" value="UniProtKB-KW"/>
</dbReference>
<dbReference type="GO" id="GO:0000155">
    <property type="term" value="F:phosphorelay sensor kinase activity"/>
    <property type="evidence" value="ECO:0000314"/>
    <property type="project" value="UniProtKB"/>
</dbReference>
<dbReference type="GO" id="GO:0000160">
    <property type="term" value="P:phosphorelay signal transduction system"/>
    <property type="evidence" value="ECO:0000314"/>
    <property type="project" value="MTBBASE"/>
</dbReference>
<dbReference type="CDD" id="cd06225">
    <property type="entry name" value="HAMP"/>
    <property type="match status" value="1"/>
</dbReference>
<dbReference type="CDD" id="cd00075">
    <property type="entry name" value="HATPase"/>
    <property type="match status" value="1"/>
</dbReference>
<dbReference type="CDD" id="cd00082">
    <property type="entry name" value="HisKA"/>
    <property type="match status" value="1"/>
</dbReference>
<dbReference type="FunFam" id="1.10.287.130:FF:000031">
    <property type="entry name" value="Two-component sensor histidine kinase"/>
    <property type="match status" value="1"/>
</dbReference>
<dbReference type="FunFam" id="3.30.565.10:FF:000066">
    <property type="entry name" value="Two-component sensor kinase MprB"/>
    <property type="match status" value="1"/>
</dbReference>
<dbReference type="Gene3D" id="1.10.287.130">
    <property type="match status" value="1"/>
</dbReference>
<dbReference type="Gene3D" id="6.10.340.10">
    <property type="match status" value="1"/>
</dbReference>
<dbReference type="Gene3D" id="3.30.565.10">
    <property type="entry name" value="Histidine kinase-like ATPase, C-terminal domain"/>
    <property type="match status" value="1"/>
</dbReference>
<dbReference type="InterPro" id="IPR050980">
    <property type="entry name" value="2C_sensor_his_kinase"/>
</dbReference>
<dbReference type="InterPro" id="IPR003660">
    <property type="entry name" value="HAMP_dom"/>
</dbReference>
<dbReference type="InterPro" id="IPR036890">
    <property type="entry name" value="HATPase_C_sf"/>
</dbReference>
<dbReference type="InterPro" id="IPR005467">
    <property type="entry name" value="His_kinase_dom"/>
</dbReference>
<dbReference type="InterPro" id="IPR003661">
    <property type="entry name" value="HisK_dim/P_dom"/>
</dbReference>
<dbReference type="InterPro" id="IPR036097">
    <property type="entry name" value="HisK_dim/P_sf"/>
</dbReference>
<dbReference type="InterPro" id="IPR004358">
    <property type="entry name" value="Sig_transdc_His_kin-like_C"/>
</dbReference>
<dbReference type="PANTHER" id="PTHR44936">
    <property type="entry name" value="SENSOR PROTEIN CREC"/>
    <property type="match status" value="1"/>
</dbReference>
<dbReference type="PANTHER" id="PTHR44936:SF9">
    <property type="entry name" value="SENSOR PROTEIN CREC"/>
    <property type="match status" value="1"/>
</dbReference>
<dbReference type="Pfam" id="PF00672">
    <property type="entry name" value="HAMP"/>
    <property type="match status" value="1"/>
</dbReference>
<dbReference type="Pfam" id="PF02518">
    <property type="entry name" value="HATPase_c"/>
    <property type="match status" value="1"/>
</dbReference>
<dbReference type="Pfam" id="PF00512">
    <property type="entry name" value="HisKA"/>
    <property type="match status" value="1"/>
</dbReference>
<dbReference type="PRINTS" id="PR00344">
    <property type="entry name" value="BCTRLSENSOR"/>
</dbReference>
<dbReference type="SMART" id="SM00304">
    <property type="entry name" value="HAMP"/>
    <property type="match status" value="1"/>
</dbReference>
<dbReference type="SMART" id="SM00387">
    <property type="entry name" value="HATPase_c"/>
    <property type="match status" value="1"/>
</dbReference>
<dbReference type="SMART" id="SM00388">
    <property type="entry name" value="HisKA"/>
    <property type="match status" value="1"/>
</dbReference>
<dbReference type="SUPFAM" id="SSF55874">
    <property type="entry name" value="ATPase domain of HSP90 chaperone/DNA topoisomerase II/histidine kinase"/>
    <property type="match status" value="1"/>
</dbReference>
<dbReference type="SUPFAM" id="SSF158472">
    <property type="entry name" value="HAMP domain-like"/>
    <property type="match status" value="1"/>
</dbReference>
<dbReference type="SUPFAM" id="SSF47384">
    <property type="entry name" value="Homodimeric domain of signal transducing histidine kinase"/>
    <property type="match status" value="1"/>
</dbReference>
<dbReference type="PROSITE" id="PS50885">
    <property type="entry name" value="HAMP"/>
    <property type="match status" value="1"/>
</dbReference>
<dbReference type="PROSITE" id="PS50109">
    <property type="entry name" value="HIS_KIN"/>
    <property type="match status" value="1"/>
</dbReference>
<protein>
    <recommendedName>
        <fullName>Signal transduction histidine-protein kinase/phosphatase MprB</fullName>
        <ecNumber>2.7.13.3</ecNumber>
        <ecNumber>3.1.3.-</ecNumber>
    </recommendedName>
    <alternativeName>
        <fullName>Mycobacterial persistence regulator B</fullName>
    </alternativeName>
</protein>
<reference key="1">
    <citation type="journal article" date="1998" name="Nature">
        <title>Deciphering the biology of Mycobacterium tuberculosis from the complete genome sequence.</title>
        <authorList>
            <person name="Cole S.T."/>
            <person name="Brosch R."/>
            <person name="Parkhill J."/>
            <person name="Garnier T."/>
            <person name="Churcher C.M."/>
            <person name="Harris D.E."/>
            <person name="Gordon S.V."/>
            <person name="Eiglmeier K."/>
            <person name="Gas S."/>
            <person name="Barry C.E. III"/>
            <person name="Tekaia F."/>
            <person name="Badcock K."/>
            <person name="Basham D."/>
            <person name="Brown D."/>
            <person name="Chillingworth T."/>
            <person name="Connor R."/>
            <person name="Davies R.M."/>
            <person name="Devlin K."/>
            <person name="Feltwell T."/>
            <person name="Gentles S."/>
            <person name="Hamlin N."/>
            <person name="Holroyd S."/>
            <person name="Hornsby T."/>
            <person name="Jagels K."/>
            <person name="Krogh A."/>
            <person name="McLean J."/>
            <person name="Moule S."/>
            <person name="Murphy L.D."/>
            <person name="Oliver S."/>
            <person name="Osborne J."/>
            <person name="Quail M.A."/>
            <person name="Rajandream M.A."/>
            <person name="Rogers J."/>
            <person name="Rutter S."/>
            <person name="Seeger K."/>
            <person name="Skelton S."/>
            <person name="Squares S."/>
            <person name="Squares R."/>
            <person name="Sulston J.E."/>
            <person name="Taylor K."/>
            <person name="Whitehead S."/>
            <person name="Barrell B.G."/>
        </authorList>
    </citation>
    <scope>NUCLEOTIDE SEQUENCE [LARGE SCALE GENOMIC DNA]</scope>
    <source>
        <strain>ATCC 25618 / H37Rv</strain>
    </source>
</reference>
<reference key="2">
    <citation type="journal article" date="2001" name="Mol. Microbiol.">
        <title>The Mycobacterium tuberculosis ECF sigma factor sigmaE: role in global gene expression and survival in macrophages.</title>
        <authorList>
            <person name="Manganelli R."/>
            <person name="Voskuil M.I."/>
            <person name="Schoolnik G.K."/>
            <person name="Smith I."/>
        </authorList>
    </citation>
    <scope>INDUCTION SIGE-DEPENDENT</scope>
    <source>
        <strain>ATCC 25618 / H37Rv</strain>
    </source>
</reference>
<reference key="3">
    <citation type="journal article" date="2001" name="Proc. Natl. Acad. Sci. U.S.A.">
        <title>Mycobacterium tuberculosis signal transduction system required for persistent infections.</title>
        <authorList>
            <person name="Zahrt T.C."/>
            <person name="Deretic V."/>
        </authorList>
    </citation>
    <scope>FUNCTION DURING STAGES OF PERSISTENT INFECTION</scope>
    <scope>INDUCTION</scope>
    <source>
        <strain>ATCC 25618 / H37Rv</strain>
    </source>
</reference>
<reference key="4">
    <citation type="journal article" date="2003" name="Infect. Immun.">
        <title>Functional analysis of the Mycobacterium tuberculosis MprAB two-component signal transduction system.</title>
        <authorList>
            <person name="Zahrt T.C."/>
            <person name="Wozniak C."/>
            <person name="Jones D."/>
            <person name="Trevett A."/>
        </authorList>
    </citation>
    <scope>FUNCTION IN SIGNAL TRANSDUCTION</scope>
    <scope>AUTOPHOSPHORYLATION</scope>
    <scope>COFACTOR</scope>
    <scope>MUTAGENESIS OF HIS-249</scope>
    <source>
        <strain>ATCC 25618 / H37Rv</strain>
    </source>
</reference>
<reference key="5">
    <citation type="journal article" date="2005" name="J. Bacteriol.">
        <title>Identification and characterization of a regulatory sequence recognized by Mycobacterium tuberculosis persistence regulator MprA.</title>
        <authorList>
            <person name="He H."/>
            <person name="Zahrt T.C."/>
        </authorList>
    </citation>
    <scope>FUNCTION IN MPRA-MEDIATED TRANSCRIPTIONAL REGULATION</scope>
    <scope>INDUCTION</scope>
    <source>
        <strain>ATCC 25618 / H37Rv</strain>
    </source>
</reference>
<reference key="6">
    <citation type="journal article" date="2006" name="J. Bacteriol.">
        <title>MprAB is a stress-responsive two-component system that directly regulates expression of sigma factors SigB and SigE in Mycobacterium tuberculosis.</title>
        <authorList>
            <person name="He H."/>
            <person name="Hovey R."/>
            <person name="Kane J."/>
            <person name="Singh V."/>
            <person name="Zahrt T.C."/>
        </authorList>
    </citation>
    <scope>FUNCTION IN STRESS RESPONSE</scope>
    <scope>INDUCTION</scope>
    <scope>TOPOLOGY</scope>
    <source>
        <strain>ATCC 25618 / H37Rv</strain>
    </source>
</reference>
<reference key="7">
    <citation type="journal article" date="2006" name="J. Infect. Dis.">
        <title>Mycobacterium tuberculosis invasion and traversal across an in vitro human blood-brain barrier as a pathogenic mechanism for central nervous system tuberculosis.</title>
        <authorList>
            <person name="Jain S.K."/>
            <person name="Paul-Satyaseela M."/>
            <person name="Lamichhane G."/>
            <person name="Kim K.S."/>
            <person name="Bishai W.R."/>
        </authorList>
    </citation>
    <scope>INDUCTION</scope>
    <source>
        <strain>ATCC 25618 / H37Rv</strain>
    </source>
</reference>
<reference key="8">
    <citation type="journal article" date="2007" name="Microbiology">
        <title>Evidence for complex interactions of stress-associated regulons in an mprAB deletion mutant of Mycobacterium tuberculosis.</title>
        <authorList>
            <person name="Pang X."/>
            <person name="Vu P."/>
            <person name="Byrd T.F."/>
            <person name="Ghanny S."/>
            <person name="Soteropoulos P."/>
            <person name="Mukamolova G.V."/>
            <person name="Wu S."/>
            <person name="Samten B."/>
            <person name="Howard S.T."/>
        </authorList>
    </citation>
    <scope>FUNCTION DURING NORMAL GROWTH CONDITION AND UNDER STRESS</scope>
    <source>
        <strain>ATCC 25618 / H37Rv</strain>
    </source>
</reference>
<reference key="9">
    <citation type="journal article" date="2008" name="BMC Syst. Biol.">
        <title>targetTB: a target identification pipeline for Mycobacterium tuberculosis through an interactome, reactome and genome-scale structural analysis.</title>
        <authorList>
            <person name="Raman K."/>
            <person name="Yeturu K."/>
            <person name="Chandra N."/>
        </authorList>
    </citation>
    <scope>IDENTIFICATION AS A DRUG TARGET [LARGE SCALE ANALYSIS]</scope>
</reference>
<reference key="10">
    <citation type="journal article" date="2011" name="Mol. Cell. Proteomics">
        <title>Proteogenomic analysis of Mycobacterium tuberculosis by high resolution mass spectrometry.</title>
        <authorList>
            <person name="Kelkar D.S."/>
            <person name="Kumar D."/>
            <person name="Kumar P."/>
            <person name="Balakrishnan L."/>
            <person name="Muthusamy B."/>
            <person name="Yadav A.K."/>
            <person name="Shrivastava P."/>
            <person name="Marimuthu A."/>
            <person name="Anand S."/>
            <person name="Sundaram H."/>
            <person name="Kingsbury R."/>
            <person name="Harsha H.C."/>
            <person name="Nair B."/>
            <person name="Prasad T.S."/>
            <person name="Chauhan D.S."/>
            <person name="Katoch K."/>
            <person name="Katoch V.M."/>
            <person name="Kumar P."/>
            <person name="Chaerkady R."/>
            <person name="Ramachandran S."/>
            <person name="Dash D."/>
            <person name="Pandey A."/>
        </authorList>
    </citation>
    <scope>IDENTIFICATION BY MASS SPECTROMETRY [LARGE SCALE ANALYSIS]</scope>
    <source>
        <strain>ATCC 25618 / H37Rv</strain>
    </source>
</reference>
<keyword id="KW-0067">ATP-binding</keyword>
<keyword id="KW-1003">Cell membrane</keyword>
<keyword id="KW-0378">Hydrolase</keyword>
<keyword id="KW-0418">Kinase</keyword>
<keyword id="KW-0460">Magnesium</keyword>
<keyword id="KW-0464">Manganese</keyword>
<keyword id="KW-0472">Membrane</keyword>
<keyword id="KW-0547">Nucleotide-binding</keyword>
<keyword id="KW-0597">Phosphoprotein</keyword>
<keyword id="KW-0904">Protein phosphatase</keyword>
<keyword id="KW-1185">Reference proteome</keyword>
<keyword id="KW-0346">Stress response</keyword>
<keyword id="KW-0808">Transferase</keyword>
<keyword id="KW-0812">Transmembrane</keyword>
<keyword id="KW-1133">Transmembrane helix</keyword>
<keyword id="KW-0902">Two-component regulatory system</keyword>
<keyword id="KW-0843">Virulence</keyword>
<gene>
    <name type="primary">mprB</name>
    <name type="ordered locus">Rv0982</name>
</gene>
<evidence type="ECO:0000255" key="1"/>
<evidence type="ECO:0000255" key="2">
    <source>
        <dbReference type="PROSITE-ProRule" id="PRU00102"/>
    </source>
</evidence>
<evidence type="ECO:0000255" key="3">
    <source>
        <dbReference type="PROSITE-ProRule" id="PRU00107"/>
    </source>
</evidence>
<evidence type="ECO:0000256" key="4">
    <source>
        <dbReference type="SAM" id="MobiDB-lite"/>
    </source>
</evidence>
<evidence type="ECO:0000269" key="5">
    <source>
    </source>
</evidence>
<evidence type="ECO:0000269" key="6">
    <source>
    </source>
</evidence>
<evidence type="ECO:0000269" key="7">
    <source>
    </source>
</evidence>
<evidence type="ECO:0000269" key="8">
    <source>
    </source>
</evidence>
<evidence type="ECO:0000269" key="9">
    <source>
    </source>
</evidence>
<evidence type="ECO:0000269" key="10">
    <source>
    </source>
</evidence>
<evidence type="ECO:0000269" key="11">
    <source>
    </source>
</evidence>
<evidence type="ECO:0000305" key="12"/>
<name>MPRB_MYCTU</name>
<organism>
    <name type="scientific">Mycobacterium tuberculosis (strain ATCC 25618 / H37Rv)</name>
    <dbReference type="NCBI Taxonomy" id="83332"/>
    <lineage>
        <taxon>Bacteria</taxon>
        <taxon>Bacillati</taxon>
        <taxon>Actinomycetota</taxon>
        <taxon>Actinomycetes</taxon>
        <taxon>Mycobacteriales</taxon>
        <taxon>Mycobacteriaceae</taxon>
        <taxon>Mycobacterium</taxon>
        <taxon>Mycobacterium tuberculosis complex</taxon>
    </lineage>
</organism>
<proteinExistence type="evidence at protein level"/>
<sequence>MWWFRRRDRAPLRATSSLSLRWRVMLLAMSMVAMVVVLMSFAVYAVISAALYSDIDNQLQSRAQLLIASGSLAADPGKAIEGTAYSDVNAMLVNPGQSIYTAQQPGQTLPVGAAEKAVIRGELFMSRRTTADQRVLAIRLTNGSSLLISKSLKPTEAVMNKLRWVLLIVGGIGVAVAAVAGGMVTRAGLRPVGRLTEAAERVARTDDLRPIPVFGSDELARLTEAFNLMLRALAESRERQARLVTDAGHELRTPLTSLRTNVELLMASMAPGAPRLPKQEMVDLRADVLAQIEELSTLVGDLVDLSRGDAGEVVHEPVDMADVVDRSLERVRRRRNDILFDVEVIGWQVYGDTAGLSRMALNLMDNAAKWSPPGGHVGVRLSQLDASHAELVVSDRGPGIPVQERRLVFERFYRSASARALPGSGLGLAIVKQVVLNHGGLLRIEDTDPGGQPPGTSIYVLLPGRRMPIPQLPGATAGARSTDIENSRGSANVISVESQSTRAT</sequence>
<accession>P9WGL1</accession>
<accession>L0T8A3</accession>
<accession>O53895</accession>
<accession>Q7D913</accession>
<comment type="function">
    <text evidence="6 7 8 9 11">Member of the two-component regulatory system MprB/MprA which contributes to maintaining a balance among several systems involved in stress resistance and is required for establishment and maintenance of persistent infection in the host. In response to environmental signals MprB acts both as a membrane-associated protein kinase that undergoes autophosphorylation and subsequently transfers the phosphate to MprA, and as a protein phosphatase that dephosphorylates phospho-MprA. MprB/MprA is involved in regulation of numerous stress-responsive genes, including up-regulation of two sigma factors, sigE and sigB as well as pepD and mprA, and repression of multiple genes from regulons associated with hypoxia, starvation and iron metabolism. The majority of genes regulated by MprB/MprA under a particular stress condition are different from those induced during normal growth, but several genes are commonly regulated under more than one condition.</text>
</comment>
<comment type="catalytic activity">
    <reaction>
        <text>ATP + protein L-histidine = ADP + protein N-phospho-L-histidine.</text>
        <dbReference type="EC" id="2.7.13.3"/>
    </reaction>
</comment>
<comment type="cofactor">
    <cofactor evidence="7">
        <name>Mg(2+)</name>
        <dbReference type="ChEBI" id="CHEBI:18420"/>
    </cofactor>
    <cofactor evidence="7">
        <name>Mn(2+)</name>
        <dbReference type="ChEBI" id="CHEBI:29035"/>
    </cofactor>
</comment>
<comment type="subcellular location">
    <subcellularLocation>
        <location evidence="12">Cell membrane</location>
        <topology evidence="12">Multi-pass membrane protein</topology>
    </subcellularLocation>
</comment>
<comment type="induction">
    <text evidence="5 6 8 9 10">Induced by MprA. Differentially up-regulated under different stress conditions, such as low concentrations of detergents and alkaline pH. Induced by low concentrations of sodium dodecyl sulfate (SDS) in a SigE-dependent manner. In strain ATCC 25618 / H37Rv, repressed during growth in macrophages. Highly up-regulated during the early stages of invasion of the human blood-brain barrier.</text>
</comment>
<comment type="PTM">
    <text>Autophosphorylated.</text>
</comment>
<comment type="miscellaneous">
    <text>Deletion experiments show that amino acids 95-133 are required for activation of MprA.</text>
</comment>
<comment type="miscellaneous">
    <text>Was identified as a high-confidence drug target.</text>
</comment>